<proteinExistence type="inferred from homology"/>
<accession>Q5WT02</accession>
<comment type="function">
    <text evidence="1">Involved in the biosynthesis of the chorismate, which leads to the biosynthesis of aromatic amino acids. Catalyzes the reversible NADPH linked reduction of 3-dehydroshikimate (DHSA) to yield shikimate (SA).</text>
</comment>
<comment type="catalytic activity">
    <reaction evidence="1">
        <text>shikimate + NADP(+) = 3-dehydroshikimate + NADPH + H(+)</text>
        <dbReference type="Rhea" id="RHEA:17737"/>
        <dbReference type="ChEBI" id="CHEBI:15378"/>
        <dbReference type="ChEBI" id="CHEBI:16630"/>
        <dbReference type="ChEBI" id="CHEBI:36208"/>
        <dbReference type="ChEBI" id="CHEBI:57783"/>
        <dbReference type="ChEBI" id="CHEBI:58349"/>
        <dbReference type="EC" id="1.1.1.25"/>
    </reaction>
</comment>
<comment type="pathway">
    <text evidence="1">Metabolic intermediate biosynthesis; chorismate biosynthesis; chorismate from D-erythrose 4-phosphate and phosphoenolpyruvate: step 4/7.</text>
</comment>
<comment type="subunit">
    <text evidence="1">Homodimer.</text>
</comment>
<comment type="similarity">
    <text evidence="1">Belongs to the shikimate dehydrogenase family.</text>
</comment>
<dbReference type="EC" id="1.1.1.25" evidence="1"/>
<dbReference type="EMBL" id="CR628337">
    <property type="protein sequence ID" value="CAH16964.1"/>
    <property type="molecule type" value="Genomic_DNA"/>
</dbReference>
<dbReference type="RefSeq" id="WP_011216649.1">
    <property type="nucleotide sequence ID" value="NC_006369.1"/>
</dbReference>
<dbReference type="SMR" id="Q5WT02"/>
<dbReference type="KEGG" id="lpf:lpl2723"/>
<dbReference type="LegioList" id="lpl2723"/>
<dbReference type="HOGENOM" id="CLU_044063_2_1_6"/>
<dbReference type="UniPathway" id="UPA00053">
    <property type="reaction ID" value="UER00087"/>
</dbReference>
<dbReference type="Proteomes" id="UP000002517">
    <property type="component" value="Chromosome"/>
</dbReference>
<dbReference type="GO" id="GO:0005829">
    <property type="term" value="C:cytosol"/>
    <property type="evidence" value="ECO:0007669"/>
    <property type="project" value="TreeGrafter"/>
</dbReference>
<dbReference type="GO" id="GO:0050661">
    <property type="term" value="F:NADP binding"/>
    <property type="evidence" value="ECO:0007669"/>
    <property type="project" value="InterPro"/>
</dbReference>
<dbReference type="GO" id="GO:0004764">
    <property type="term" value="F:shikimate 3-dehydrogenase (NADP+) activity"/>
    <property type="evidence" value="ECO:0007669"/>
    <property type="project" value="UniProtKB-UniRule"/>
</dbReference>
<dbReference type="GO" id="GO:0008652">
    <property type="term" value="P:amino acid biosynthetic process"/>
    <property type="evidence" value="ECO:0007669"/>
    <property type="project" value="UniProtKB-KW"/>
</dbReference>
<dbReference type="GO" id="GO:0009073">
    <property type="term" value="P:aromatic amino acid family biosynthetic process"/>
    <property type="evidence" value="ECO:0007669"/>
    <property type="project" value="UniProtKB-KW"/>
</dbReference>
<dbReference type="GO" id="GO:0009423">
    <property type="term" value="P:chorismate biosynthetic process"/>
    <property type="evidence" value="ECO:0007669"/>
    <property type="project" value="UniProtKB-UniRule"/>
</dbReference>
<dbReference type="GO" id="GO:0019632">
    <property type="term" value="P:shikimate metabolic process"/>
    <property type="evidence" value="ECO:0007669"/>
    <property type="project" value="InterPro"/>
</dbReference>
<dbReference type="CDD" id="cd01065">
    <property type="entry name" value="NAD_bind_Shikimate_DH"/>
    <property type="match status" value="1"/>
</dbReference>
<dbReference type="FunFam" id="3.40.50.10860:FF:000006">
    <property type="entry name" value="Shikimate dehydrogenase (NADP(+))"/>
    <property type="match status" value="1"/>
</dbReference>
<dbReference type="Gene3D" id="3.40.50.10860">
    <property type="entry name" value="Leucine Dehydrogenase, chain A, domain 1"/>
    <property type="match status" value="1"/>
</dbReference>
<dbReference type="Gene3D" id="3.40.50.720">
    <property type="entry name" value="NAD(P)-binding Rossmann-like Domain"/>
    <property type="match status" value="1"/>
</dbReference>
<dbReference type="HAMAP" id="MF_00222">
    <property type="entry name" value="Shikimate_DH_AroE"/>
    <property type="match status" value="1"/>
</dbReference>
<dbReference type="InterPro" id="IPR046346">
    <property type="entry name" value="Aminoacid_DH-like_N_sf"/>
</dbReference>
<dbReference type="InterPro" id="IPR036291">
    <property type="entry name" value="NAD(P)-bd_dom_sf"/>
</dbReference>
<dbReference type="InterPro" id="IPR041121">
    <property type="entry name" value="SDH_C"/>
</dbReference>
<dbReference type="InterPro" id="IPR011342">
    <property type="entry name" value="Shikimate_DH"/>
</dbReference>
<dbReference type="InterPro" id="IPR013708">
    <property type="entry name" value="Shikimate_DH-bd_N"/>
</dbReference>
<dbReference type="InterPro" id="IPR022893">
    <property type="entry name" value="Shikimate_DH_fam"/>
</dbReference>
<dbReference type="InterPro" id="IPR006151">
    <property type="entry name" value="Shikm_DH/Glu-tRNA_Rdtase"/>
</dbReference>
<dbReference type="NCBIfam" id="TIGR00507">
    <property type="entry name" value="aroE"/>
    <property type="match status" value="1"/>
</dbReference>
<dbReference type="NCBIfam" id="NF001310">
    <property type="entry name" value="PRK00258.1-2"/>
    <property type="match status" value="1"/>
</dbReference>
<dbReference type="PANTHER" id="PTHR21089:SF1">
    <property type="entry name" value="BIFUNCTIONAL 3-DEHYDROQUINATE DEHYDRATASE_SHIKIMATE DEHYDROGENASE, CHLOROPLASTIC"/>
    <property type="match status" value="1"/>
</dbReference>
<dbReference type="PANTHER" id="PTHR21089">
    <property type="entry name" value="SHIKIMATE DEHYDROGENASE"/>
    <property type="match status" value="1"/>
</dbReference>
<dbReference type="Pfam" id="PF18317">
    <property type="entry name" value="SDH_C"/>
    <property type="match status" value="1"/>
</dbReference>
<dbReference type="Pfam" id="PF01488">
    <property type="entry name" value="Shikimate_DH"/>
    <property type="match status" value="1"/>
</dbReference>
<dbReference type="Pfam" id="PF08501">
    <property type="entry name" value="Shikimate_dh_N"/>
    <property type="match status" value="1"/>
</dbReference>
<dbReference type="SUPFAM" id="SSF53223">
    <property type="entry name" value="Aminoacid dehydrogenase-like, N-terminal domain"/>
    <property type="match status" value="1"/>
</dbReference>
<dbReference type="SUPFAM" id="SSF51735">
    <property type="entry name" value="NAD(P)-binding Rossmann-fold domains"/>
    <property type="match status" value="1"/>
</dbReference>
<evidence type="ECO:0000255" key="1">
    <source>
        <dbReference type="HAMAP-Rule" id="MF_00222"/>
    </source>
</evidence>
<sequence>MLRRFAVIGNPIVHSLSPVIHQMFAQQTQIELIYEKILGDDVKFEQQISDFFIQYGNGLNVTLPYKKRAYELAKVRTQRCTLAGAANTLWMEENQLHADNTDGIGLIRDLSRFLELKDKKILILGAGGAARGIIFPLLEAKPLQLIVANRTLEKAKELQRQFPQINVTSFAELTEFFDLIINATSASLSHQVIVLPEEVLSHKPFCYDLAYNQKTSTAFVQYARNRGCEAVDGLGMLVEQAAEAFFIWNNIMPSTKEILEQLRSF</sequence>
<gene>
    <name evidence="1" type="primary">aroE</name>
    <name type="ordered locus">lpl2723</name>
</gene>
<feature type="chain" id="PRO_0000325130" description="Shikimate dehydrogenase (NADP(+))">
    <location>
        <begin position="1"/>
        <end position="265"/>
    </location>
</feature>
<feature type="active site" description="Proton acceptor" evidence="1">
    <location>
        <position position="66"/>
    </location>
</feature>
<feature type="binding site" evidence="1">
    <location>
        <begin position="15"/>
        <end position="17"/>
    </location>
    <ligand>
        <name>shikimate</name>
        <dbReference type="ChEBI" id="CHEBI:36208"/>
    </ligand>
</feature>
<feature type="binding site" evidence="1">
    <location>
        <position position="62"/>
    </location>
    <ligand>
        <name>shikimate</name>
        <dbReference type="ChEBI" id="CHEBI:36208"/>
    </ligand>
</feature>
<feature type="binding site" evidence="1">
    <location>
        <position position="87"/>
    </location>
    <ligand>
        <name>shikimate</name>
        <dbReference type="ChEBI" id="CHEBI:36208"/>
    </ligand>
</feature>
<feature type="binding site" evidence="1">
    <location>
        <position position="102"/>
    </location>
    <ligand>
        <name>shikimate</name>
        <dbReference type="ChEBI" id="CHEBI:36208"/>
    </ligand>
</feature>
<feature type="binding site" evidence="1">
    <location>
        <begin position="125"/>
        <end position="129"/>
    </location>
    <ligand>
        <name>NADP(+)</name>
        <dbReference type="ChEBI" id="CHEBI:58349"/>
    </ligand>
</feature>
<feature type="binding site" evidence="1">
    <location>
        <begin position="149"/>
        <end position="154"/>
    </location>
    <ligand>
        <name>NADP(+)</name>
        <dbReference type="ChEBI" id="CHEBI:58349"/>
    </ligand>
</feature>
<feature type="binding site" evidence="1">
    <location>
        <position position="209"/>
    </location>
    <ligand>
        <name>NADP(+)</name>
        <dbReference type="ChEBI" id="CHEBI:58349"/>
    </ligand>
</feature>
<feature type="binding site" evidence="1">
    <location>
        <position position="211"/>
    </location>
    <ligand>
        <name>shikimate</name>
        <dbReference type="ChEBI" id="CHEBI:36208"/>
    </ligand>
</feature>
<feature type="binding site" evidence="1">
    <location>
        <position position="233"/>
    </location>
    <ligand>
        <name>NADP(+)</name>
        <dbReference type="ChEBI" id="CHEBI:58349"/>
    </ligand>
</feature>
<protein>
    <recommendedName>
        <fullName evidence="1">Shikimate dehydrogenase (NADP(+))</fullName>
        <shortName evidence="1">SDH</shortName>
        <ecNumber evidence="1">1.1.1.25</ecNumber>
    </recommendedName>
</protein>
<keyword id="KW-0028">Amino-acid biosynthesis</keyword>
<keyword id="KW-0057">Aromatic amino acid biosynthesis</keyword>
<keyword id="KW-0521">NADP</keyword>
<keyword id="KW-0560">Oxidoreductase</keyword>
<organism>
    <name type="scientific">Legionella pneumophila (strain Lens)</name>
    <dbReference type="NCBI Taxonomy" id="297245"/>
    <lineage>
        <taxon>Bacteria</taxon>
        <taxon>Pseudomonadati</taxon>
        <taxon>Pseudomonadota</taxon>
        <taxon>Gammaproteobacteria</taxon>
        <taxon>Legionellales</taxon>
        <taxon>Legionellaceae</taxon>
        <taxon>Legionella</taxon>
    </lineage>
</organism>
<name>AROE_LEGPL</name>
<reference key="1">
    <citation type="journal article" date="2004" name="Nat. Genet.">
        <title>Evidence in the Legionella pneumophila genome for exploitation of host cell functions and high genome plasticity.</title>
        <authorList>
            <person name="Cazalet C."/>
            <person name="Rusniok C."/>
            <person name="Brueggemann H."/>
            <person name="Zidane N."/>
            <person name="Magnier A."/>
            <person name="Ma L."/>
            <person name="Tichit M."/>
            <person name="Jarraud S."/>
            <person name="Bouchier C."/>
            <person name="Vandenesch F."/>
            <person name="Kunst F."/>
            <person name="Etienne J."/>
            <person name="Glaser P."/>
            <person name="Buchrieser C."/>
        </authorList>
    </citation>
    <scope>NUCLEOTIDE SEQUENCE [LARGE SCALE GENOMIC DNA]</scope>
    <source>
        <strain>Lens</strain>
    </source>
</reference>